<name>PSBJ_CHAVU</name>
<accession>Q1ACJ0</accession>
<keyword id="KW-0150">Chloroplast</keyword>
<keyword id="KW-0472">Membrane</keyword>
<keyword id="KW-0602">Photosynthesis</keyword>
<keyword id="KW-0604">Photosystem II</keyword>
<keyword id="KW-0934">Plastid</keyword>
<keyword id="KW-0674">Reaction center</keyword>
<keyword id="KW-0793">Thylakoid</keyword>
<keyword id="KW-0812">Transmembrane</keyword>
<keyword id="KW-1133">Transmembrane helix</keyword>
<geneLocation type="chloroplast"/>
<evidence type="ECO:0000255" key="1">
    <source>
        <dbReference type="HAMAP-Rule" id="MF_01305"/>
    </source>
</evidence>
<proteinExistence type="inferred from homology"/>
<comment type="function">
    <text evidence="1">One of the components of the core complex of photosystem II (PSII). PSII is a light-driven water:plastoquinone oxidoreductase that uses light energy to abstract electrons from H(2)O, generating O(2) and a proton gradient subsequently used for ATP formation. It consists of a core antenna complex that captures photons, and an electron transfer chain that converts photonic excitation into a charge separation.</text>
</comment>
<comment type="subunit">
    <text evidence="1">PSII is composed of 1 copy each of membrane proteins PsbA, PsbB, PsbC, PsbD, PsbE, PsbF, PsbH, PsbI, PsbJ, PsbK, PsbL, PsbM, PsbT, PsbX, PsbY, PsbZ, Psb30/Ycf12, at least 3 peripheral proteins of the oxygen-evolving complex and a large number of cofactors. It forms dimeric complexes.</text>
</comment>
<comment type="subcellular location">
    <subcellularLocation>
        <location evidence="1">Plastid</location>
        <location evidence="1">Chloroplast thylakoid membrane</location>
        <topology evidence="1">Single-pass membrane protein</topology>
    </subcellularLocation>
</comment>
<comment type="similarity">
    <text evidence="1">Belongs to the PsbJ family.</text>
</comment>
<feature type="chain" id="PRO_0000276088" description="Photosystem II reaction center protein J">
    <location>
        <begin position="1"/>
        <end position="42"/>
    </location>
</feature>
<feature type="transmembrane region" description="Helical" evidence="1">
    <location>
        <begin position="10"/>
        <end position="30"/>
    </location>
</feature>
<reference key="1">
    <citation type="journal article" date="2006" name="Mol. Biol. Evol.">
        <title>The chloroplast genome sequence of Chara vulgaris sheds new light into the closest green algal relatives of land plants.</title>
        <authorList>
            <person name="Turmel M."/>
            <person name="Otis C."/>
            <person name="Lemieux C."/>
        </authorList>
    </citation>
    <scope>NUCLEOTIDE SEQUENCE [LARGE SCALE GENOMIC DNA]</scope>
</reference>
<gene>
    <name evidence="1" type="primary">psbJ</name>
</gene>
<dbReference type="EMBL" id="DQ229107">
    <property type="protein sequence ID" value="ABA61960.1"/>
    <property type="molecule type" value="Genomic_DNA"/>
</dbReference>
<dbReference type="RefSeq" id="YP_635757.1">
    <property type="nucleotide sequence ID" value="NC_008097.1"/>
</dbReference>
<dbReference type="SMR" id="Q1ACJ0"/>
<dbReference type="GeneID" id="4100326"/>
<dbReference type="GO" id="GO:0009535">
    <property type="term" value="C:chloroplast thylakoid membrane"/>
    <property type="evidence" value="ECO:0007669"/>
    <property type="project" value="UniProtKB-SubCell"/>
</dbReference>
<dbReference type="GO" id="GO:0009539">
    <property type="term" value="C:photosystem II reaction center"/>
    <property type="evidence" value="ECO:0007669"/>
    <property type="project" value="InterPro"/>
</dbReference>
<dbReference type="GO" id="GO:0015979">
    <property type="term" value="P:photosynthesis"/>
    <property type="evidence" value="ECO:0007669"/>
    <property type="project" value="UniProtKB-UniRule"/>
</dbReference>
<dbReference type="Gene3D" id="6.10.250.2070">
    <property type="match status" value="1"/>
</dbReference>
<dbReference type="HAMAP" id="MF_01305">
    <property type="entry name" value="PSII_PsbJ"/>
    <property type="match status" value="1"/>
</dbReference>
<dbReference type="InterPro" id="IPR002682">
    <property type="entry name" value="PSII_PsbJ"/>
</dbReference>
<dbReference type="InterPro" id="IPR037267">
    <property type="entry name" value="PSII_PsbJ_sf"/>
</dbReference>
<dbReference type="NCBIfam" id="NF002722">
    <property type="entry name" value="PRK02565.1"/>
    <property type="match status" value="1"/>
</dbReference>
<dbReference type="PANTHER" id="PTHR34812">
    <property type="entry name" value="PHOTOSYSTEM II REACTION CENTER PROTEIN J"/>
    <property type="match status" value="1"/>
</dbReference>
<dbReference type="PANTHER" id="PTHR34812:SF3">
    <property type="entry name" value="PHOTOSYSTEM II REACTION CENTER PROTEIN J"/>
    <property type="match status" value="1"/>
</dbReference>
<dbReference type="Pfam" id="PF01788">
    <property type="entry name" value="PsbJ"/>
    <property type="match status" value="1"/>
</dbReference>
<dbReference type="SUPFAM" id="SSF161021">
    <property type="entry name" value="Photosystem II reaction center protein J, PsbJ"/>
    <property type="match status" value="1"/>
</dbReference>
<protein>
    <recommendedName>
        <fullName evidence="1">Photosystem II reaction center protein J</fullName>
        <shortName evidence="1">PSII-J</shortName>
    </recommendedName>
</protein>
<sequence length="42" mass="4332">MSNVGTTGRIPLWLIATVAGILVLTVVGIFFYGSYSGLGSSL</sequence>
<organism>
    <name type="scientific">Chara vulgaris</name>
    <name type="common">Common stonewort</name>
    <dbReference type="NCBI Taxonomy" id="55564"/>
    <lineage>
        <taxon>Eukaryota</taxon>
        <taxon>Viridiplantae</taxon>
        <taxon>Streptophyta</taxon>
        <taxon>Charophyceae</taxon>
        <taxon>Charales</taxon>
        <taxon>Characeae</taxon>
        <taxon>Chara</taxon>
    </lineage>
</organism>